<gene>
    <name evidence="10" type="primary">desA</name>
    <name type="ordered locus">slr1350</name>
</gene>
<accession>P20388</accession>
<keyword id="KW-0275">Fatty acid biosynthesis</keyword>
<keyword id="KW-0276">Fatty acid metabolism</keyword>
<keyword id="KW-0408">Iron</keyword>
<keyword id="KW-0444">Lipid biosynthesis</keyword>
<keyword id="KW-0443">Lipid metabolism</keyword>
<keyword id="KW-0472">Membrane</keyword>
<keyword id="KW-0560">Oxidoreductase</keyword>
<keyword id="KW-1185">Reference proteome</keyword>
<keyword id="KW-0812">Transmembrane</keyword>
<keyword id="KW-1133">Transmembrane helix</keyword>
<organism>
    <name type="scientific">Synechocystis sp. (strain ATCC 27184 / PCC 6803 / Kazusa)</name>
    <dbReference type="NCBI Taxonomy" id="1111708"/>
    <lineage>
        <taxon>Bacteria</taxon>
        <taxon>Bacillati</taxon>
        <taxon>Cyanobacteriota</taxon>
        <taxon>Cyanophyceae</taxon>
        <taxon>Synechococcales</taxon>
        <taxon>Merismopediaceae</taxon>
        <taxon>Synechocystis</taxon>
    </lineage>
</organism>
<comment type="function">
    <text evidence="4 5">Desaturase involved in fatty acid biosynthesis (PubMed:2118597). Introduces a double bond at carbon 12 of oleoyl groups (18:1) attached to the sn-1 position of the glycerol moiety of membrane glycerolipids (PubMed:20377689, PubMed:2118597). This enzyme is involved in chilling tolerance because the phase transition temperature of lipids of cellular membranes depends on the degree of unsaturation of fatty acids of the membrane lipids (PubMed:20377689, PubMed:2118597).</text>
</comment>
<comment type="catalytic activity">
    <reaction evidence="4 5">
        <text>a 1-[(9Z)-octadecenoyl]-2-acyl-glycerolipid + 2 reduced [2Fe-2S]-[ferredoxin] + O2 + 2 H(+) = a 1-[(9Z,12Z)-octadecdienoyl]-2-acyl-glycerolipid + 2 oxidized [2Fe-2S]-[ferredoxin] + 2 H2O</text>
        <dbReference type="Rhea" id="RHEA:46776"/>
        <dbReference type="Rhea" id="RHEA-COMP:10000"/>
        <dbReference type="Rhea" id="RHEA-COMP:10001"/>
        <dbReference type="ChEBI" id="CHEBI:15377"/>
        <dbReference type="ChEBI" id="CHEBI:15378"/>
        <dbReference type="ChEBI" id="CHEBI:15379"/>
        <dbReference type="ChEBI" id="CHEBI:33737"/>
        <dbReference type="ChEBI" id="CHEBI:33738"/>
        <dbReference type="ChEBI" id="CHEBI:87008"/>
        <dbReference type="ChEBI" id="CHEBI:87010"/>
        <dbReference type="EC" id="1.14.19.45"/>
    </reaction>
    <physiologicalReaction direction="left-to-right" evidence="5">
        <dbReference type="Rhea" id="RHEA:46777"/>
    </physiologicalReaction>
</comment>
<comment type="cofactor">
    <cofactor evidence="1">
        <name>Fe(2+)</name>
        <dbReference type="ChEBI" id="CHEBI:29033"/>
    </cofactor>
</comment>
<comment type="pathway">
    <text evidence="5 7">Lipid metabolism; polyunsaturated fatty acid biosynthesis.</text>
</comment>
<comment type="subcellular location">
    <subcellularLocation>
        <location evidence="3">Membrane</location>
        <topology evidence="3">Multi-pass membrane protein</topology>
    </subcellularLocation>
</comment>
<comment type="induction">
    <text evidence="8">Expression is enhanced about 10-fold by exposure of the cells to light (PubMed:9539715). Low basic levels of the gene transcripts increase rapidly upon exposure to low temperature and decrease again to low levels in cells shifted back to high temperature (PubMed:9539715). The induction of expression is completely blocked in the presence of rifampicin, chloramphenicol and 3-(3,4-dichlorophenyl)-1,1-dimethylurea (DCMU) (PubMed:9539715).</text>
</comment>
<comment type="domain">
    <text evidence="1">The histidine box domains are involved in binding the catalytic metal ions.</text>
</comment>
<comment type="disruption phenotype">
    <text evidence="5 6 7">The disruption mutant loses the ability to desaturate fatty acids at the carbon 12 position (PubMed:2118597, PubMed:7524725, PubMed:8978669). The growth rate of the desA-desD double mutant, which lacks polyunsaturated molecular species of membrane lipids, is dramatically lower at 20 and 25 degrees Celsius than that of the wild-type strain (PubMed:8978669). This double mutation does not significantly alter the polypeptide composition or ratio of lipid to protein in thylakoid membranes, but it decreases the tolerance of the cells to photoinhibition of photosynthesis at low temperature by suppressing recovery of the photosystem II protein complex from photoinhibitory damage (PubMed:8978669).</text>
</comment>
<comment type="biotechnology">
    <text evidence="4">The desaturase can increase the polyunsaturated fatty acid content in cell lipids, and thus, enhance the cold tolerance of transgenic plants (PubMed:20377689). For instance, the expression of desA in potato plants has a clear positive effect on cold tolerance (PubMed:20377689).</text>
</comment>
<comment type="similarity">
    <text evidence="11">Belongs to the fatty acid desaturase type 2 family.</text>
</comment>
<evidence type="ECO:0000250" key="1">
    <source>
        <dbReference type="UniProtKB" id="O00767"/>
    </source>
</evidence>
<evidence type="ECO:0000250" key="2">
    <source>
        <dbReference type="UniProtKB" id="Q54795"/>
    </source>
</evidence>
<evidence type="ECO:0000255" key="3"/>
<evidence type="ECO:0000269" key="4">
    <source>
    </source>
</evidence>
<evidence type="ECO:0000269" key="5">
    <source>
    </source>
</evidence>
<evidence type="ECO:0000269" key="6">
    <source>
    </source>
</evidence>
<evidence type="ECO:0000269" key="7">
    <source>
    </source>
</evidence>
<evidence type="ECO:0000269" key="8">
    <source>
    </source>
</evidence>
<evidence type="ECO:0000303" key="9">
    <source>
    </source>
</evidence>
<evidence type="ECO:0000303" key="10">
    <source>
    </source>
</evidence>
<evidence type="ECO:0000305" key="11"/>
<protein>
    <recommendedName>
        <fullName evidence="11">sn-1 oleoyl-lipid 12-desaturase</fullName>
        <ecNumber evidence="4 5">1.14.19.45</ecNumber>
    </recommendedName>
    <alternativeName>
        <fullName evidence="9">Acyl-lipid delta12-desaturase</fullName>
    </alternativeName>
    <alternativeName>
        <fullName evidence="11">Delta(12)-fatty-acid desaturase</fullName>
    </alternativeName>
</protein>
<proteinExistence type="evidence at protein level"/>
<name>DESA_SYNY3</name>
<sequence length="351" mass="40495">MTATIPPLTPTVTPSNPDRPIADLKLQDIIKTLPKECFEKKASKAWASVLITLGAIAVGYLGIIYLPWYCLPITWIWTGTALTGAFVVGHDCGHRSFAKKRWVNDLVGHIAFAPLIYPFHSWRLLHDHHHLHTNKIEVDNAWDPWSVEAFQASPAIVRLFYRAIRGPFWWTGSIFHWSLMHFKLSNFAQRDRNKVKLSIAVVFLFAAIAFPALIITTGVWGFVKFWLMPWLVYHFWMSTFTIVHHTIPEIRFRPAADWSAAEAQLNGTVHCDYPRWVEVLCHDINVHIPHHLSVAIPSYNLRLAHGSLKENWGPFLYERTFNWQLMQQISGQCHLYDPEHGYRTFGSLKKV</sequence>
<reference key="1">
    <citation type="journal article" date="1990" name="Nature">
        <title>Enhancement of chilling tolerance of a cyanobacterium by genetic manipulation of fatty acid desaturation.</title>
        <authorList>
            <person name="Wada H."/>
            <person name="Gombos Z."/>
            <person name="Murata N."/>
        </authorList>
    </citation>
    <scope>NUCLEOTIDE SEQUENCE [GENOMIC DNA]</scope>
    <scope>FUNCTION</scope>
    <scope>CATALYTIC ACTIVITY</scope>
    <scope>PATHWAY</scope>
    <scope>DISRUPTION PHENOTYPE</scope>
    <source>
        <strain>ATCC 27184 / PCC 6803 / N-1</strain>
    </source>
</reference>
<reference key="2">
    <citation type="journal article" date="1996" name="DNA Res.">
        <title>Sequence analysis of the genome of the unicellular cyanobacterium Synechocystis sp. strain PCC6803. II. Sequence determination of the entire genome and assignment of potential protein-coding regions.</title>
        <authorList>
            <person name="Kaneko T."/>
            <person name="Sato S."/>
            <person name="Kotani H."/>
            <person name="Tanaka A."/>
            <person name="Asamizu E."/>
            <person name="Nakamura Y."/>
            <person name="Miyajima N."/>
            <person name="Hirosawa M."/>
            <person name="Sugiura M."/>
            <person name="Sasamoto S."/>
            <person name="Kimura T."/>
            <person name="Hosouchi T."/>
            <person name="Matsuno A."/>
            <person name="Muraki A."/>
            <person name="Nakazaki N."/>
            <person name="Naruo K."/>
            <person name="Okumura S."/>
            <person name="Shimpo S."/>
            <person name="Takeuchi C."/>
            <person name="Wada T."/>
            <person name="Watanabe A."/>
            <person name="Yamada M."/>
            <person name="Yasuda M."/>
            <person name="Tabata S."/>
        </authorList>
    </citation>
    <scope>NUCLEOTIDE SEQUENCE [LARGE SCALE GENOMIC DNA]</scope>
    <source>
        <strain>ATCC 27184 / PCC 6803 / Kazusa</strain>
    </source>
</reference>
<reference key="3">
    <citation type="journal article" date="1994" name="Plant Mol. Biol.">
        <title>Cloning of omega 3 desaturase from cyanobacteria and its use in altering the degree of membrane-lipid unsaturation.</title>
        <authorList>
            <person name="Sakamoto T."/>
            <person name="Los D.A."/>
            <person name="Higashi S."/>
            <person name="Wada H."/>
            <person name="Nishida I."/>
            <person name="Ohmori M."/>
            <person name="Murata N."/>
        </authorList>
    </citation>
    <scope>DISRUPTION PHENOTYPE</scope>
    <source>
        <strain>ATCC 27184 / PCC 6803 / N-1</strain>
    </source>
</reference>
<reference key="4">
    <citation type="journal article" date="1996" name="EMBO J.">
        <title>Targeted mutagenesis of acyl-lipid desaturases in Synechocystis: evidence for the important roles of polyunsaturated membrane lipids in growth, respiration and photosynthesis.</title>
        <authorList>
            <person name="Tasaka Y."/>
            <person name="Gombos Z."/>
            <person name="Nishiyama Y."/>
            <person name="Mohanty P."/>
            <person name="Ohba T."/>
            <person name="Ohki K."/>
            <person name="Murata N."/>
        </authorList>
    </citation>
    <scope>PATHWAY</scope>
    <scope>DISRUPTION PHENOTYPE</scope>
</reference>
<reference key="5">
    <citation type="journal article" date="1998" name="Proc. Natl. Acad. Sci. U.S.A.">
        <title>Light-induced expression of fatty acid desaturase genes.</title>
        <authorList>
            <person name="Kis M."/>
            <person name="Zsiros O."/>
            <person name="Farkas T."/>
            <person name="Wada H."/>
            <person name="Nagy F."/>
            <person name="Gombos Z."/>
        </authorList>
    </citation>
    <scope>TRANSCRIPTIONAL REGULATION</scope>
    <source>
        <strain>ATCC 27184 / PCC 6803 / N-1</strain>
    </source>
</reference>
<reference key="6">
    <citation type="journal article" date="2010" name="J. Integr. Plant Biol.">
        <title>Expression of acyl-lipid Delta12-desaturase gene in prokaryotic and eukaryotic cells and its effect on cold stress tolerance of potato.</title>
        <authorList>
            <person name="Amiri R.M."/>
            <person name="Yur'eva N.O."/>
            <person name="Shimshilashvili K.R."/>
            <person name="Goldenkova-Pavlova I.V."/>
            <person name="Pchelkin V.P."/>
            <person name="Kuznitsova E.I."/>
            <person name="Tsydendambaev V.D."/>
            <person name="Trunova T.I."/>
            <person name="Los D.A."/>
            <person name="Jouzani G.S."/>
            <person name="Nosov A.M."/>
        </authorList>
    </citation>
    <scope>FUNCTION</scope>
    <scope>CATALYTIC ACTIVITY</scope>
    <scope>BIOTECHNOLOGY</scope>
    <source>
        <strain>ATCC 27184 / PCC 6803 / N-1</strain>
    </source>
</reference>
<feature type="chain" id="PRO_0000185417" description="sn-1 oleoyl-lipid 12-desaturase">
    <location>
        <begin position="1"/>
        <end position="351"/>
    </location>
</feature>
<feature type="transmembrane region" description="Helical" evidence="3">
    <location>
        <begin position="46"/>
        <end position="66"/>
    </location>
</feature>
<feature type="transmembrane region" description="Helical" evidence="3">
    <location>
        <begin position="68"/>
        <end position="88"/>
    </location>
</feature>
<feature type="transmembrane region" description="Helical" evidence="3">
    <location>
        <begin position="102"/>
        <end position="122"/>
    </location>
</feature>
<feature type="transmembrane region" description="Helical" evidence="3">
    <location>
        <begin position="199"/>
        <end position="219"/>
    </location>
</feature>
<feature type="transmembrane region" description="Helical" evidence="3">
    <location>
        <begin position="222"/>
        <end position="242"/>
    </location>
</feature>
<feature type="short sequence motif" description="Histidine box-1" evidence="2">
    <location>
        <begin position="90"/>
        <end position="94"/>
    </location>
</feature>
<feature type="short sequence motif" description="Histidine box-2" evidence="2">
    <location>
        <begin position="126"/>
        <end position="130"/>
    </location>
</feature>
<feature type="short sequence motif" description="Histidine box-3" evidence="2">
    <location>
        <begin position="290"/>
        <end position="294"/>
    </location>
</feature>
<dbReference type="EC" id="1.14.19.45" evidence="4 5"/>
<dbReference type="EMBL" id="X53508">
    <property type="protein sequence ID" value="CAA37584.1"/>
    <property type="molecule type" value="Genomic_DNA"/>
</dbReference>
<dbReference type="EMBL" id="BA000022">
    <property type="protein sequence ID" value="BAA18169.1"/>
    <property type="molecule type" value="Genomic_DNA"/>
</dbReference>
<dbReference type="PIR" id="S11519">
    <property type="entry name" value="S11519"/>
</dbReference>
<dbReference type="SMR" id="P20388"/>
<dbReference type="FunCoup" id="P20388">
    <property type="interactions" value="280"/>
</dbReference>
<dbReference type="IntAct" id="P20388">
    <property type="interactions" value="3"/>
</dbReference>
<dbReference type="STRING" id="1148.gene:10499042"/>
<dbReference type="PaxDb" id="1148-1653254"/>
<dbReference type="EnsemblBacteria" id="BAA18169">
    <property type="protein sequence ID" value="BAA18169"/>
    <property type="gene ID" value="BAA18169"/>
</dbReference>
<dbReference type="KEGG" id="syn:slr1350"/>
<dbReference type="eggNOG" id="COG3239">
    <property type="taxonomic scope" value="Bacteria"/>
</dbReference>
<dbReference type="InParanoid" id="P20388"/>
<dbReference type="PhylomeDB" id="P20388"/>
<dbReference type="BioCyc" id="MetaCyc:MONOMER-16956"/>
<dbReference type="BRENDA" id="1.14.19.45">
    <property type="organism ID" value="382"/>
</dbReference>
<dbReference type="BRENDA" id="1.14.19.6">
    <property type="organism ID" value="382"/>
</dbReference>
<dbReference type="UniPathway" id="UPA00658"/>
<dbReference type="Proteomes" id="UP000001425">
    <property type="component" value="Chromosome"/>
</dbReference>
<dbReference type="GO" id="GO:0016020">
    <property type="term" value="C:membrane"/>
    <property type="evidence" value="ECO:0007669"/>
    <property type="project" value="UniProtKB-SubCell"/>
</dbReference>
<dbReference type="GO" id="GO:0102985">
    <property type="term" value="F:acyl-CoA (9+3)-desaturase activity"/>
    <property type="evidence" value="ECO:0007669"/>
    <property type="project" value="UniProtKB-EC"/>
</dbReference>
<dbReference type="GO" id="GO:0016491">
    <property type="term" value="F:oxidoreductase activity"/>
    <property type="evidence" value="ECO:0000318"/>
    <property type="project" value="GO_Central"/>
</dbReference>
<dbReference type="GO" id="GO:0006636">
    <property type="term" value="P:unsaturated fatty acid biosynthetic process"/>
    <property type="evidence" value="ECO:0007669"/>
    <property type="project" value="UniProtKB-UniPathway"/>
</dbReference>
<dbReference type="CDD" id="cd03507">
    <property type="entry name" value="Delta12-FADS-like"/>
    <property type="match status" value="1"/>
</dbReference>
<dbReference type="InterPro" id="IPR005804">
    <property type="entry name" value="FA_desaturase_dom"/>
</dbReference>
<dbReference type="InterPro" id="IPR005803">
    <property type="entry name" value="FADS-2_CS"/>
</dbReference>
<dbReference type="InterPro" id="IPR012171">
    <property type="entry name" value="Fatty_acid_desaturase"/>
</dbReference>
<dbReference type="PANTHER" id="PTHR32100">
    <property type="entry name" value="OMEGA-6 FATTY ACID DESATURASE, CHLOROPLASTIC"/>
    <property type="match status" value="1"/>
</dbReference>
<dbReference type="Pfam" id="PF00487">
    <property type="entry name" value="FA_desaturase"/>
    <property type="match status" value="1"/>
</dbReference>
<dbReference type="PROSITE" id="PS00574">
    <property type="entry name" value="FATTY_ACID_DESATUR_2"/>
    <property type="match status" value="1"/>
</dbReference>